<comment type="catalytic activity">
    <reaction evidence="1">
        <text>L-citrulline + L-aspartate + ATP = 2-(N(omega)-L-arginino)succinate + AMP + diphosphate + H(+)</text>
        <dbReference type="Rhea" id="RHEA:10932"/>
        <dbReference type="ChEBI" id="CHEBI:15378"/>
        <dbReference type="ChEBI" id="CHEBI:29991"/>
        <dbReference type="ChEBI" id="CHEBI:30616"/>
        <dbReference type="ChEBI" id="CHEBI:33019"/>
        <dbReference type="ChEBI" id="CHEBI:57472"/>
        <dbReference type="ChEBI" id="CHEBI:57743"/>
        <dbReference type="ChEBI" id="CHEBI:456215"/>
        <dbReference type="EC" id="6.3.4.5"/>
    </reaction>
</comment>
<comment type="pathway">
    <text evidence="1">Amino-acid biosynthesis; L-arginine biosynthesis; L-arginine from L-ornithine and carbamoyl phosphate: step 2/3.</text>
</comment>
<comment type="subunit">
    <text evidence="1">Homotetramer.</text>
</comment>
<comment type="subcellular location">
    <subcellularLocation>
        <location evidence="1">Cytoplasm</location>
    </subcellularLocation>
</comment>
<comment type="similarity">
    <text evidence="1">Belongs to the argininosuccinate synthase family. Type 1 subfamily.</text>
</comment>
<gene>
    <name evidence="1" type="primary">argG</name>
    <name type="ordered locus">LSL_0306</name>
</gene>
<accession>Q1WV65</accession>
<organism>
    <name type="scientific">Ligilactobacillus salivarius (strain UCC118)</name>
    <name type="common">Lactobacillus salivarius</name>
    <dbReference type="NCBI Taxonomy" id="362948"/>
    <lineage>
        <taxon>Bacteria</taxon>
        <taxon>Bacillati</taxon>
        <taxon>Bacillota</taxon>
        <taxon>Bacilli</taxon>
        <taxon>Lactobacillales</taxon>
        <taxon>Lactobacillaceae</taxon>
        <taxon>Ligilactobacillus</taxon>
    </lineage>
</organism>
<name>ASSY_LIGS1</name>
<dbReference type="EC" id="6.3.4.5" evidence="1"/>
<dbReference type="EMBL" id="CP000233">
    <property type="protein sequence ID" value="ABD99120.1"/>
    <property type="molecule type" value="Genomic_DNA"/>
</dbReference>
<dbReference type="RefSeq" id="WP_011475673.1">
    <property type="nucleotide sequence ID" value="NC_007929.1"/>
</dbReference>
<dbReference type="RefSeq" id="YP_535203.1">
    <property type="nucleotide sequence ID" value="NC_007929.1"/>
</dbReference>
<dbReference type="SMR" id="Q1WV65"/>
<dbReference type="STRING" id="362948.LSL_0306"/>
<dbReference type="KEGG" id="lsl:LSL_0306"/>
<dbReference type="PATRIC" id="fig|362948.14.peg.382"/>
<dbReference type="HOGENOM" id="CLU_032784_4_2_9"/>
<dbReference type="OrthoDB" id="9801641at2"/>
<dbReference type="UniPathway" id="UPA00068">
    <property type="reaction ID" value="UER00113"/>
</dbReference>
<dbReference type="Proteomes" id="UP000006559">
    <property type="component" value="Chromosome"/>
</dbReference>
<dbReference type="GO" id="GO:0005737">
    <property type="term" value="C:cytoplasm"/>
    <property type="evidence" value="ECO:0007669"/>
    <property type="project" value="UniProtKB-SubCell"/>
</dbReference>
<dbReference type="GO" id="GO:0004055">
    <property type="term" value="F:argininosuccinate synthase activity"/>
    <property type="evidence" value="ECO:0007669"/>
    <property type="project" value="UniProtKB-UniRule"/>
</dbReference>
<dbReference type="GO" id="GO:0005524">
    <property type="term" value="F:ATP binding"/>
    <property type="evidence" value="ECO:0007669"/>
    <property type="project" value="UniProtKB-UniRule"/>
</dbReference>
<dbReference type="GO" id="GO:0000053">
    <property type="term" value="P:argininosuccinate metabolic process"/>
    <property type="evidence" value="ECO:0007669"/>
    <property type="project" value="TreeGrafter"/>
</dbReference>
<dbReference type="GO" id="GO:0006526">
    <property type="term" value="P:L-arginine biosynthetic process"/>
    <property type="evidence" value="ECO:0007669"/>
    <property type="project" value="UniProtKB-UniRule"/>
</dbReference>
<dbReference type="GO" id="GO:0000050">
    <property type="term" value="P:urea cycle"/>
    <property type="evidence" value="ECO:0007669"/>
    <property type="project" value="TreeGrafter"/>
</dbReference>
<dbReference type="CDD" id="cd01999">
    <property type="entry name" value="ASS"/>
    <property type="match status" value="1"/>
</dbReference>
<dbReference type="FunFam" id="1.20.5.470:FF:000002">
    <property type="entry name" value="Argininosuccinate synthase"/>
    <property type="match status" value="1"/>
</dbReference>
<dbReference type="FunFam" id="3.40.50.620:FF:000038">
    <property type="entry name" value="Argininosuccinate synthase"/>
    <property type="match status" value="1"/>
</dbReference>
<dbReference type="FunFam" id="3.90.1260.10:FF:000007">
    <property type="entry name" value="Argininosuccinate synthase"/>
    <property type="match status" value="1"/>
</dbReference>
<dbReference type="Gene3D" id="3.90.1260.10">
    <property type="entry name" value="Argininosuccinate synthetase, chain A, domain 2"/>
    <property type="match status" value="1"/>
</dbReference>
<dbReference type="Gene3D" id="3.40.50.620">
    <property type="entry name" value="HUPs"/>
    <property type="match status" value="1"/>
</dbReference>
<dbReference type="Gene3D" id="1.20.5.470">
    <property type="entry name" value="Single helix bin"/>
    <property type="match status" value="1"/>
</dbReference>
<dbReference type="HAMAP" id="MF_00005">
    <property type="entry name" value="Arg_succ_synth_type1"/>
    <property type="match status" value="1"/>
</dbReference>
<dbReference type="InterPro" id="IPR048268">
    <property type="entry name" value="Arginosuc_syn_C"/>
</dbReference>
<dbReference type="InterPro" id="IPR048267">
    <property type="entry name" value="Arginosuc_syn_N"/>
</dbReference>
<dbReference type="InterPro" id="IPR001518">
    <property type="entry name" value="Arginosuc_synth"/>
</dbReference>
<dbReference type="InterPro" id="IPR018223">
    <property type="entry name" value="Arginosuc_synth_CS"/>
</dbReference>
<dbReference type="InterPro" id="IPR023434">
    <property type="entry name" value="Arginosuc_synth_type_1_subfam"/>
</dbReference>
<dbReference type="InterPro" id="IPR024074">
    <property type="entry name" value="AS_cat/multimer_dom_body"/>
</dbReference>
<dbReference type="InterPro" id="IPR014729">
    <property type="entry name" value="Rossmann-like_a/b/a_fold"/>
</dbReference>
<dbReference type="NCBIfam" id="TIGR00032">
    <property type="entry name" value="argG"/>
    <property type="match status" value="1"/>
</dbReference>
<dbReference type="NCBIfam" id="NF001770">
    <property type="entry name" value="PRK00509.1"/>
    <property type="match status" value="1"/>
</dbReference>
<dbReference type="PANTHER" id="PTHR11587">
    <property type="entry name" value="ARGININOSUCCINATE SYNTHASE"/>
    <property type="match status" value="1"/>
</dbReference>
<dbReference type="PANTHER" id="PTHR11587:SF2">
    <property type="entry name" value="ARGININOSUCCINATE SYNTHASE"/>
    <property type="match status" value="1"/>
</dbReference>
<dbReference type="Pfam" id="PF20979">
    <property type="entry name" value="Arginosuc_syn_C"/>
    <property type="match status" value="1"/>
</dbReference>
<dbReference type="Pfam" id="PF00764">
    <property type="entry name" value="Arginosuc_synth"/>
    <property type="match status" value="1"/>
</dbReference>
<dbReference type="SUPFAM" id="SSF52402">
    <property type="entry name" value="Adenine nucleotide alpha hydrolases-like"/>
    <property type="match status" value="1"/>
</dbReference>
<dbReference type="SUPFAM" id="SSF69864">
    <property type="entry name" value="Argininosuccinate synthetase, C-terminal domain"/>
    <property type="match status" value="1"/>
</dbReference>
<dbReference type="PROSITE" id="PS00564">
    <property type="entry name" value="ARGININOSUCCIN_SYN_1"/>
    <property type="match status" value="1"/>
</dbReference>
<dbReference type="PROSITE" id="PS00565">
    <property type="entry name" value="ARGININOSUCCIN_SYN_2"/>
    <property type="match status" value="1"/>
</dbReference>
<proteinExistence type="inferred from homology"/>
<feature type="chain" id="PRO_0000263934" description="Argininosuccinate synthase">
    <location>
        <begin position="1"/>
        <end position="403"/>
    </location>
</feature>
<feature type="binding site" evidence="1">
    <location>
        <begin position="9"/>
        <end position="17"/>
    </location>
    <ligand>
        <name>ATP</name>
        <dbReference type="ChEBI" id="CHEBI:30616"/>
    </ligand>
</feature>
<feature type="binding site" evidence="1">
    <location>
        <position position="86"/>
    </location>
    <ligand>
        <name>L-citrulline</name>
        <dbReference type="ChEBI" id="CHEBI:57743"/>
    </ligand>
</feature>
<feature type="binding site" evidence="1">
    <location>
        <position position="116"/>
    </location>
    <ligand>
        <name>ATP</name>
        <dbReference type="ChEBI" id="CHEBI:30616"/>
    </ligand>
</feature>
<feature type="binding site" evidence="1">
    <location>
        <position position="118"/>
    </location>
    <ligand>
        <name>L-aspartate</name>
        <dbReference type="ChEBI" id="CHEBI:29991"/>
    </ligand>
</feature>
<feature type="binding site" evidence="1">
    <location>
        <position position="122"/>
    </location>
    <ligand>
        <name>L-aspartate</name>
        <dbReference type="ChEBI" id="CHEBI:29991"/>
    </ligand>
</feature>
<feature type="binding site" evidence="1">
    <location>
        <position position="122"/>
    </location>
    <ligand>
        <name>L-citrulline</name>
        <dbReference type="ChEBI" id="CHEBI:57743"/>
    </ligand>
</feature>
<feature type="binding site" evidence="1">
    <location>
        <position position="123"/>
    </location>
    <ligand>
        <name>L-aspartate</name>
        <dbReference type="ChEBI" id="CHEBI:29991"/>
    </ligand>
</feature>
<feature type="binding site" evidence="1">
    <location>
        <position position="126"/>
    </location>
    <ligand>
        <name>L-citrulline</name>
        <dbReference type="ChEBI" id="CHEBI:57743"/>
    </ligand>
</feature>
<feature type="binding site" evidence="1">
    <location>
        <position position="174"/>
    </location>
    <ligand>
        <name>L-citrulline</name>
        <dbReference type="ChEBI" id="CHEBI:57743"/>
    </ligand>
</feature>
<feature type="binding site" evidence="1">
    <location>
        <position position="259"/>
    </location>
    <ligand>
        <name>L-citrulline</name>
        <dbReference type="ChEBI" id="CHEBI:57743"/>
    </ligand>
</feature>
<feature type="binding site" evidence="1">
    <location>
        <position position="271"/>
    </location>
    <ligand>
        <name>L-citrulline</name>
        <dbReference type="ChEBI" id="CHEBI:57743"/>
    </ligand>
</feature>
<evidence type="ECO:0000255" key="1">
    <source>
        <dbReference type="HAMAP-Rule" id="MF_00005"/>
    </source>
</evidence>
<sequence length="403" mass="44809">MEKGKVVLAYSGGLDTSVEIAWLKNKGYDVIACCIDVGEGKDLEAIKEKGLKVGAVESIVIDAKHEFAEEYVLPALQGHAYYENKYPLVSALSRPLIVKKLVEVAKEHGATAIAHGCTGKGNDQVRFEVGIHALVPEMKIEDPIRDLHWSREEEIEYAKENGIPVPISKKSPYSIDENLWGRANECGILEDPWQSAPADAYDRTVALEDTPDTPDVIEITFDKGVPTKLDGEELPLEELIMKLDKLAGKHGIGRIDHVENRLVGIKSREVYECPAATVLLAAHKDMEDLTHERDLAHFKPIIEQKLSELIYNGLWFSPLMDAIQAFLAETQKVVNGVVRVKLFKGNVICEGRKSPNSLYSEELATYTSADQFDQEAAAGFIKLWGLPTQVYAEVMQQNEKNNK</sequence>
<keyword id="KW-0028">Amino-acid biosynthesis</keyword>
<keyword id="KW-0055">Arginine biosynthesis</keyword>
<keyword id="KW-0067">ATP-binding</keyword>
<keyword id="KW-0963">Cytoplasm</keyword>
<keyword id="KW-0436">Ligase</keyword>
<keyword id="KW-0547">Nucleotide-binding</keyword>
<keyword id="KW-1185">Reference proteome</keyword>
<protein>
    <recommendedName>
        <fullName evidence="1">Argininosuccinate synthase</fullName>
        <ecNumber evidence="1">6.3.4.5</ecNumber>
    </recommendedName>
    <alternativeName>
        <fullName evidence="1">Citrulline--aspartate ligase</fullName>
    </alternativeName>
</protein>
<reference key="1">
    <citation type="journal article" date="2006" name="Proc. Natl. Acad. Sci. U.S.A.">
        <title>Multireplicon genome architecture of Lactobacillus salivarius.</title>
        <authorList>
            <person name="Claesson M.J."/>
            <person name="Li Y."/>
            <person name="Leahy S."/>
            <person name="Canchaya C."/>
            <person name="van Pijkeren J.P."/>
            <person name="Cerdeno-Tarraga A.M."/>
            <person name="Parkhill J."/>
            <person name="Flynn S."/>
            <person name="O'Sullivan G.C."/>
            <person name="Collins J.K."/>
            <person name="Higgins D."/>
            <person name="Shanahan F."/>
            <person name="Fitzgerald G.F."/>
            <person name="van Sinderen D."/>
            <person name="O'Toole P.W."/>
        </authorList>
    </citation>
    <scope>NUCLEOTIDE SEQUENCE [LARGE SCALE GENOMIC DNA]</scope>
    <source>
        <strain>UCC118</strain>
    </source>
</reference>